<proteinExistence type="evidence at protein level"/>
<comment type="function">
    <text>Hydrolyzes all ester bonds in triglyceride and displays a high affinity for triolein. For unsaturated substrates having long fatty acyl chains (C18:2 cis-9, cis-12 and C18:3 cis-9, cis-12, cis-15) GCL I shows higher specific activity than GCL II, whereas GCL II shows higher specific activity against saturated substrates having short fatty acid chains (C8, C10, C12 and C14).</text>
</comment>
<comment type="catalytic activity">
    <reaction>
        <text>a triacylglycerol + H2O = a diacylglycerol + a fatty acid + H(+)</text>
        <dbReference type="Rhea" id="RHEA:12044"/>
        <dbReference type="ChEBI" id="CHEBI:15377"/>
        <dbReference type="ChEBI" id="CHEBI:15378"/>
        <dbReference type="ChEBI" id="CHEBI:17855"/>
        <dbReference type="ChEBI" id="CHEBI:18035"/>
        <dbReference type="ChEBI" id="CHEBI:28868"/>
        <dbReference type="EC" id="3.1.1.3"/>
    </reaction>
</comment>
<comment type="subunit">
    <text>Monomer.</text>
</comment>
<comment type="subcellular location">
    <subcellularLocation>
        <location>Secreted</location>
    </subcellularLocation>
</comment>
<comment type="similarity">
    <text evidence="5">Belongs to the type-B carboxylesterase/lipase family.</text>
</comment>
<reference key="1">
    <citation type="journal article" date="1989" name="J. Biochem.">
        <title>cDNA molecular cloning of Geotrichum candidum lipase.</title>
        <authorList>
            <person name="Shimada Y."/>
            <person name="Sugihara A."/>
            <person name="Tominaga Y."/>
            <person name="Iizumi T."/>
            <person name="Tsunasawa S."/>
        </authorList>
    </citation>
    <scope>NUCLEOTIDE SEQUENCE</scope>
    <scope>PARTIAL PROTEIN SEQUENCE</scope>
    <source>
        <strain>ATCC 34614</strain>
    </source>
</reference>
<reference key="2">
    <citation type="journal article" date="1993" name="J. Biochem.">
        <title>Cloning and sequencing of two chromosomal lipase genes from Geotrichum candidum.</title>
        <authorList>
            <person name="Nagao T."/>
            <person name="Shimada Y."/>
            <person name="Sugihara A."/>
            <person name="Tominaga Y."/>
        </authorList>
    </citation>
    <scope>NUCLEOTIDE SEQUENCE [GENOMIC DNA] OF 1-30 AND 551-563</scope>
    <scope>PYROGLUTAMATE FORMATION AT GLN-20</scope>
    <source>
        <strain>ATCC 34614</strain>
    </source>
</reference>
<reference key="3">
    <citation type="journal article" date="1994" name="Eur. J. Biochem.">
        <title>Polymorphism in the lipase genes of Geotrichum candidum strains.</title>
        <authorList>
            <person name="Bertolini M.C."/>
            <person name="Laramee L."/>
            <person name="Thomas D.Y."/>
            <person name="Cygler M."/>
            <person name="Schrag J.D."/>
            <person name="Vernet T."/>
        </authorList>
    </citation>
    <scope>NUCLEOTIDE SEQUENCE OF 20-563</scope>
    <source>
        <strain>ATCC 34614</strain>
        <strain>ATCC 74169 / NRRL Y-552 / ED00652</strain>
        <strain>ATCC 90287 / NRRL Y-553</strain>
        <strain>NRCC 205002</strain>
    </source>
</reference>
<reference key="4">
    <citation type="journal article" date="1990" name="Biochem. J.">
        <title>Does sequence similarity of human choline esterase, Torpedo acetylcholine esterase and Geotrichum candidum lipase reveal the active site serine residue?</title>
        <authorList>
            <person name="Slabas A.R."/>
            <person name="Windust J."/>
            <person name="Sidebottom C.M."/>
        </authorList>
    </citation>
    <scope>SIMILARITY TO CARBOXYLESTERASES</scope>
</reference>
<reference key="5">
    <citation type="journal article" date="1995" name="Eur. J. Biochem.">
        <title>Expression and characterization of Geotrichum candidum lipase I gene. Comparison of specificity profile with lipase II.</title>
        <authorList>
            <person name="Bertolini M.C."/>
            <person name="Schrag J.D."/>
            <person name="Cygler M."/>
            <person name="Ziomek E."/>
            <person name="Thomas D.Y."/>
            <person name="Vernet T."/>
        </authorList>
    </citation>
    <scope>CHARACTERIZATION</scope>
</reference>
<name>LIP1_GEOCN</name>
<sequence length="563" mass="61199">MVSKTFFLAAALNVVGTLAQAPTAVLNGNEVISGVLEGKVDTFKGIPFADPPVGDLRFKHPQPFTGSYQGLKANDFSSACMQLDPGNAISLLDKVVGLGKIIPDNLRGPLYDMAQGSVSMNEDCLYLNVFRPAGTKPDAKLPVMVWIYGGAFVFGSSASYPGNGYVKESVEMGQPVVFVSINYRTGPYGFLGGDAITAEGNTNAGLHDQRKGLEWVSDNIANFGGDPDKVMIFGESAGAMSVAHQLVAYGGDNTYNGKQLFHSAILQSGGPLPYFDSTSVGPESAYSRFAQYAGCDASAGDNETLACLRSKSSDVLHSAQNSYDLKDLFGLLPQFLGFGPRPDGNIIPDAAYELYRSGRYAKVPYITGNQEDEGTILAPVAINATTTPHVKKWLKYICSEASDASLDRVLSLYPGSWSEGAPFRTGILNALTPQFKRIAAIFTDLLFQSPRRVMLNATKDVNRWTYLATQLHNLVPFLGTFHGSDLLFQYYVDLGPSSAYRRYFISFANHHDPNVGTNLKQWDMYTDSGKEMLQIHMIGNSMRTDDFRIEGISNFESDVTLFG</sequence>
<protein>
    <recommendedName>
        <fullName>Lipase 1</fullName>
        <ecNumber>3.1.1.3</ecNumber>
    </recommendedName>
    <alternativeName>
        <fullName>GCL I</fullName>
    </alternativeName>
    <alternativeName>
        <fullName>Lipase I</fullName>
    </alternativeName>
</protein>
<accession>P17573</accession>
<accession>Q00882</accession>
<accession>Q00883</accession>
<accession>Q00884</accession>
<accession>Q00886</accession>
<accession>Q02176</accession>
<accession>Q96WW8</accession>
<feature type="signal peptide">
    <location>
        <begin position="1"/>
        <end position="19"/>
    </location>
</feature>
<feature type="chain" id="PRO_0000008624" description="Lipase 1">
    <location>
        <begin position="20"/>
        <end position="563"/>
    </location>
</feature>
<feature type="active site" description="Acyl-ester intermediate" evidence="3">
    <location>
        <position position="236"/>
    </location>
</feature>
<feature type="active site" description="Charge relay system" evidence="1">
    <location>
        <position position="373"/>
    </location>
</feature>
<feature type="active site" description="Charge relay system" evidence="1">
    <location>
        <position position="482"/>
    </location>
</feature>
<feature type="modified residue" description="Pyrrolidone carboxylic acid" evidence="4">
    <location>
        <position position="20"/>
    </location>
</feature>
<feature type="glycosylation site" description="N-linked (GlcNAc...) asparagine" evidence="2">
    <location>
        <position position="302"/>
    </location>
</feature>
<feature type="glycosylation site" description="N-linked (GlcNAc...) asparagine" evidence="2">
    <location>
        <position position="383"/>
    </location>
</feature>
<feature type="disulfide bond">
    <location>
        <begin position="80"/>
        <end position="124"/>
    </location>
</feature>
<feature type="disulfide bond">
    <location>
        <begin position="295"/>
        <end position="307"/>
    </location>
</feature>
<feature type="sequence variant" description="In strain: NRRL Y-553.">
    <original>E</original>
    <variation>G</variation>
    <location>
        <position position="37"/>
    </location>
</feature>
<feature type="sequence variant" description="In strain: NRRL Y-553.">
    <original>L</original>
    <variation>W</variation>
    <location>
        <position position="91"/>
    </location>
</feature>
<feature type="sequence variant" description="In strain: NRCC 205002 and NRRL Y-553.">
    <original>I</original>
    <variation>L</variation>
    <location>
        <position position="102"/>
    </location>
</feature>
<feature type="sequence variant" description="In strain: NRCC 205002.">
    <original>N</original>
    <variation>S</variation>
    <location>
        <position position="201"/>
    </location>
</feature>
<feature type="sequence variant" description="In strain: NRRL Y-553.">
    <original>Q</original>
    <variation>K</variation>
    <location>
        <position position="259"/>
    </location>
</feature>
<feature type="sequence variant" description="In strain: NRCC 205002.">
    <original>A</original>
    <variation>T</variation>
    <location>
        <position position="297"/>
    </location>
</feature>
<feature type="sequence variant" description="In strain: NRCC 205002 and NRRL Y-553.">
    <original>G</original>
    <variation>S</variation>
    <location>
        <position position="300"/>
    </location>
</feature>
<feature type="sequence variant" description="In strain: NRCC 205002.">
    <original>E</original>
    <variation>D</variation>
    <location>
        <position position="303"/>
    </location>
</feature>
<feature type="sequence variant" description="In strain: NRCC 205002.">
    <original>E</original>
    <variation>Q</variation>
    <location>
        <position position="400"/>
    </location>
</feature>
<feature type="sequence variant" description="In strain: NRRL Y-552.">
    <original>S</original>
    <variation>P</variation>
    <location>
        <position position="405"/>
    </location>
</feature>
<feature type="sequence variant" description="In strain: NRCC 205002.">
    <original>A</original>
    <variation>S</variation>
    <location>
        <position position="421"/>
    </location>
</feature>
<feature type="sequence variant" description="In strain: NRCC 205002.">
    <original>K</original>
    <variation>Q</variation>
    <location>
        <position position="520"/>
    </location>
</feature>
<feature type="sequence variant" description="In strain: NRCC 205002, NRRL Y-552 and NRRL Y-553.">
    <original>S</original>
    <variation>A</variation>
    <location>
        <position position="528"/>
    </location>
</feature>
<feature type="sequence variant" description="In strain: NRRL Y-553.">
    <original>I</original>
    <variation>V</variation>
    <location>
        <position position="538"/>
    </location>
</feature>
<feature type="sequence conflict" description="In Ref. 1; AA sequence." evidence="5" ref="1">
    <original>V</original>
    <variation>L</variation>
    <location>
        <position position="170"/>
    </location>
</feature>
<feature type="sequence conflict" description="In Ref. 1; AA sequence." evidence="5" ref="1">
    <original>VDLGP</original>
    <variation>AGPWS</variation>
    <location>
        <begin position="492"/>
        <end position="496"/>
    </location>
</feature>
<keyword id="KW-0903">Direct protein sequencing</keyword>
<keyword id="KW-1015">Disulfide bond</keyword>
<keyword id="KW-0325">Glycoprotein</keyword>
<keyword id="KW-0378">Hydrolase</keyword>
<keyword id="KW-0442">Lipid degradation</keyword>
<keyword id="KW-0443">Lipid metabolism</keyword>
<keyword id="KW-0873">Pyrrolidone carboxylic acid</keyword>
<keyword id="KW-0964">Secreted</keyword>
<keyword id="KW-0732">Signal</keyword>
<gene>
    <name type="primary">LIP1</name>
</gene>
<organism>
    <name type="scientific">Geotrichum candidum</name>
    <name type="common">Oospora lactis</name>
    <name type="synonym">Dipodascus geotrichum</name>
    <dbReference type="NCBI Taxonomy" id="1173061"/>
    <lineage>
        <taxon>Eukaryota</taxon>
        <taxon>Fungi</taxon>
        <taxon>Dikarya</taxon>
        <taxon>Ascomycota</taxon>
        <taxon>Saccharomycotina</taxon>
        <taxon>Dipodascomycetes</taxon>
        <taxon>Dipodascales</taxon>
        <taxon>Dipodascaceae</taxon>
        <taxon>Geotrichum</taxon>
    </lineage>
</organism>
<evidence type="ECO:0000250" key="1"/>
<evidence type="ECO:0000255" key="2"/>
<evidence type="ECO:0000255" key="3">
    <source>
        <dbReference type="PROSITE-ProRule" id="PRU10039"/>
    </source>
</evidence>
<evidence type="ECO:0000269" key="4">
    <source>
    </source>
</evidence>
<evidence type="ECO:0000305" key="5"/>
<dbReference type="EC" id="3.1.1.3"/>
<dbReference type="EMBL" id="U02622">
    <property type="protein sequence ID" value="AAA03435.1"/>
    <property type="molecule type" value="Unassigned_DNA"/>
</dbReference>
<dbReference type="EMBL" id="U02387">
    <property type="protein sequence ID" value="AAA03425.1"/>
    <property type="molecule type" value="Unassigned_DNA"/>
</dbReference>
<dbReference type="EMBL" id="U02524">
    <property type="protein sequence ID" value="AAA03428.1"/>
    <property type="molecule type" value="Unassigned_DNA"/>
</dbReference>
<dbReference type="EMBL" id="U02525">
    <property type="protein sequence ID" value="AAA03429.1"/>
    <property type="molecule type" value="Unassigned_DNA"/>
</dbReference>
<dbReference type="EMBL" id="AH004356">
    <property type="protein sequence ID" value="AAB28106.1"/>
    <property type="molecule type" value="Genomic_DNA"/>
</dbReference>
<dbReference type="EMBL" id="AH004356">
    <property type="protein sequence ID" value="AAB28107.1"/>
    <property type="molecule type" value="Genomic_DNA"/>
</dbReference>
<dbReference type="PIR" id="PN0492">
    <property type="entry name" value="ACGUGC"/>
</dbReference>
<dbReference type="PIR" id="S41090">
    <property type="entry name" value="S41090"/>
</dbReference>
<dbReference type="PIR" id="S41091">
    <property type="entry name" value="S41091"/>
</dbReference>
<dbReference type="PIR" id="S41092">
    <property type="entry name" value="S41092"/>
</dbReference>
<dbReference type="PIR" id="S41093">
    <property type="entry name" value="S41093"/>
</dbReference>
<dbReference type="SMR" id="P17573"/>
<dbReference type="ESTHER" id="geoca-1lipa">
    <property type="family name" value="Fungal_carboxylesterase_lipase"/>
</dbReference>
<dbReference type="GlyCosmos" id="P17573">
    <property type="glycosylation" value="2 sites, No reported glycans"/>
</dbReference>
<dbReference type="GO" id="GO:0005576">
    <property type="term" value="C:extracellular region"/>
    <property type="evidence" value="ECO:0007669"/>
    <property type="project" value="UniProtKB-SubCell"/>
</dbReference>
<dbReference type="GO" id="GO:0004806">
    <property type="term" value="F:triacylglycerol lipase activity"/>
    <property type="evidence" value="ECO:0007669"/>
    <property type="project" value="UniProtKB-EC"/>
</dbReference>
<dbReference type="GO" id="GO:0016042">
    <property type="term" value="P:lipid catabolic process"/>
    <property type="evidence" value="ECO:0007669"/>
    <property type="project" value="UniProtKB-KW"/>
</dbReference>
<dbReference type="CDD" id="cd00312">
    <property type="entry name" value="Esterase_lipase"/>
    <property type="match status" value="1"/>
</dbReference>
<dbReference type="Gene3D" id="3.40.50.1820">
    <property type="entry name" value="alpha/beta hydrolase"/>
    <property type="match status" value="1"/>
</dbReference>
<dbReference type="InterPro" id="IPR029058">
    <property type="entry name" value="AB_hydrolase_fold"/>
</dbReference>
<dbReference type="InterPro" id="IPR002018">
    <property type="entry name" value="CarbesteraseB"/>
</dbReference>
<dbReference type="InterPro" id="IPR019826">
    <property type="entry name" value="Carboxylesterase_B_AS"/>
</dbReference>
<dbReference type="InterPro" id="IPR019819">
    <property type="entry name" value="Carboxylesterase_B_CS"/>
</dbReference>
<dbReference type="InterPro" id="IPR050309">
    <property type="entry name" value="Type-B_Carboxylest/Lipase"/>
</dbReference>
<dbReference type="PANTHER" id="PTHR11559">
    <property type="entry name" value="CARBOXYLESTERASE"/>
    <property type="match status" value="1"/>
</dbReference>
<dbReference type="Pfam" id="PF00135">
    <property type="entry name" value="COesterase"/>
    <property type="match status" value="1"/>
</dbReference>
<dbReference type="SUPFAM" id="SSF53474">
    <property type="entry name" value="alpha/beta-Hydrolases"/>
    <property type="match status" value="1"/>
</dbReference>
<dbReference type="PROSITE" id="PS00122">
    <property type="entry name" value="CARBOXYLESTERASE_B_1"/>
    <property type="match status" value="1"/>
</dbReference>
<dbReference type="PROSITE" id="PS00941">
    <property type="entry name" value="CARBOXYLESTERASE_B_2"/>
    <property type="match status" value="1"/>
</dbReference>